<feature type="chain" id="PRO_0000174088" description="Pesticidal crystal protein Cry15Aa">
    <location>
        <begin position="1"/>
        <end position="340"/>
    </location>
</feature>
<feature type="region of interest" description="Disordered" evidence="1">
    <location>
        <begin position="318"/>
        <end position="340"/>
    </location>
</feature>
<organism>
    <name type="scientific">Bacillus thuringiensis subsp. thompsoni</name>
    <dbReference type="NCBI Taxonomy" id="44162"/>
    <lineage>
        <taxon>Bacteria</taxon>
        <taxon>Bacillati</taxon>
        <taxon>Bacillota</taxon>
        <taxon>Bacilli</taxon>
        <taxon>Bacillales</taxon>
        <taxon>Bacillaceae</taxon>
        <taxon>Bacillus</taxon>
        <taxon>Bacillus cereus group</taxon>
    </lineage>
</organism>
<gene>
    <name type="primary">cry15Aa</name>
    <name type="synonym">cryXVA(a)</name>
</gene>
<protein>
    <recommendedName>
        <fullName>Pesticidal crystal protein Cry15Aa</fullName>
    </recommendedName>
    <alternativeName>
        <fullName>38 kDa crystal protein</fullName>
    </alternativeName>
    <alternativeName>
        <fullName>Crystaline entomocidal protoxin</fullName>
    </alternativeName>
    <alternativeName>
        <fullName>Insecticidal delta-endotoxin CryXVA(a)</fullName>
    </alternativeName>
</protein>
<evidence type="ECO:0000256" key="1">
    <source>
        <dbReference type="SAM" id="MobiDB-lite"/>
    </source>
</evidence>
<keyword id="KW-0614">Plasmid</keyword>
<keyword id="KW-0749">Sporulation</keyword>
<keyword id="KW-0800">Toxin</keyword>
<keyword id="KW-0843">Virulence</keyword>
<sequence length="340" mass="37547">MAIMNDIAQDAARAWDIIAGPFIRPGTTPTNRQLFNYQIGNIEVEPGNLNFSVVPELDFSVSQDLFNNTSVQQSQTASFNESRTETTSTAVTHGVKSGVTVSASAKFNAKILVKSIEQTITTTVSTEYNFSSTTTRTNTVTRGWSIAQPVLVPPHSRVTATLQIYKGDFTVPVLLSLRVYGQTGTLAGNPSFPSLYAATYENTLLGRIREHIAPPALFRASNAYISNGVQAIWRGTATTRVSQGLYSVVRIDERPLAGYSGETRTYYLPVTLSNSSQILTPGSLGSEIPIINPVPNASCKKENSPIIIHHDREKHRERDYDKEHICHDQAEKYERDYDKE</sequence>
<geneLocation type="plasmid"/>
<accession>Q45729</accession>
<proteinExistence type="evidence at transcript level"/>
<name>C15AA_BACUT</name>
<dbReference type="EMBL" id="M76442">
    <property type="protein sequence ID" value="AAA22333.1"/>
    <property type="molecule type" value="Genomic_DNA"/>
</dbReference>
<dbReference type="PIR" id="B41969">
    <property type="entry name" value="B41969"/>
</dbReference>
<dbReference type="SMR" id="Q45729"/>
<dbReference type="TCDB" id="1.C.78.1.1">
    <property type="family name" value="the crystal protein (cry) family"/>
</dbReference>
<dbReference type="GO" id="GO:0090729">
    <property type="term" value="F:toxin activity"/>
    <property type="evidence" value="ECO:0007669"/>
    <property type="project" value="UniProtKB-KW"/>
</dbReference>
<dbReference type="GO" id="GO:0030435">
    <property type="term" value="P:sporulation resulting in formation of a cellular spore"/>
    <property type="evidence" value="ECO:0007669"/>
    <property type="project" value="UniProtKB-KW"/>
</dbReference>
<dbReference type="CDD" id="cd20226">
    <property type="entry name" value="PFM_Cry51Aa-like"/>
    <property type="match status" value="1"/>
</dbReference>
<dbReference type="Gene3D" id="2.170.15.10">
    <property type="entry name" value="Proaerolysin, chain A, domain 3"/>
    <property type="match status" value="1"/>
</dbReference>
<dbReference type="InterPro" id="IPR004991">
    <property type="entry name" value="Aerolysin-like"/>
</dbReference>
<dbReference type="InterPro" id="IPR011218">
    <property type="entry name" value="Insecticidal_delta_endotoxin"/>
</dbReference>
<dbReference type="Pfam" id="PF03318">
    <property type="entry name" value="ETX_MTX2"/>
    <property type="match status" value="1"/>
</dbReference>
<dbReference type="PIRSF" id="PIRSF026584">
    <property type="entry name" value="Delta_tox"/>
    <property type="match status" value="1"/>
</dbReference>
<dbReference type="SUPFAM" id="SSF56973">
    <property type="entry name" value="Aerolisin/ETX pore-forming domain"/>
    <property type="match status" value="1"/>
</dbReference>
<reference key="1">
    <citation type="journal article" date="1992" name="J. Bacteriol.">
        <title>Molecular characterization of two novel crystal protein genes from Bacillus thuringiensis subsp. thompsoni.</title>
        <authorList>
            <person name="Brown K.L."/>
            <person name="Whiteley H.R."/>
        </authorList>
    </citation>
    <scope>NUCLEOTIDE SEQUENCE [GENOMIC DNA]</scope>
</reference>
<comment type="function">
    <text>Promotes colloidosmotic lysis by binding to the midgut epithelial cells of lepidopteran larvae.</text>
</comment>
<comment type="developmental stage">
    <text>The crystal protein is produced during sporulation and is accumulated both as an inclusion and as part of the spore coat.</text>
</comment>